<reference key="1">
    <citation type="submission" date="2006-12" db="EMBL/GenBank/DDBJ databases">
        <title>Complete sequence of Shewanella sp. W3-18-1.</title>
        <authorList>
            <consortium name="US DOE Joint Genome Institute"/>
            <person name="Copeland A."/>
            <person name="Lucas S."/>
            <person name="Lapidus A."/>
            <person name="Barry K."/>
            <person name="Detter J.C."/>
            <person name="Glavina del Rio T."/>
            <person name="Hammon N."/>
            <person name="Israni S."/>
            <person name="Dalin E."/>
            <person name="Tice H."/>
            <person name="Pitluck S."/>
            <person name="Chain P."/>
            <person name="Malfatti S."/>
            <person name="Shin M."/>
            <person name="Vergez L."/>
            <person name="Schmutz J."/>
            <person name="Larimer F."/>
            <person name="Land M."/>
            <person name="Hauser L."/>
            <person name="Kyrpides N."/>
            <person name="Lykidis A."/>
            <person name="Tiedje J."/>
            <person name="Richardson P."/>
        </authorList>
    </citation>
    <scope>NUCLEOTIDE SEQUENCE [LARGE SCALE GENOMIC DNA]</scope>
    <source>
        <strain>W3-18-1</strain>
    </source>
</reference>
<dbReference type="EMBL" id="CP000503">
    <property type="protein sequence ID" value="ABM23020.1"/>
    <property type="molecule type" value="Genomic_DNA"/>
</dbReference>
<dbReference type="RefSeq" id="WP_011787575.1">
    <property type="nucleotide sequence ID" value="NC_008750.1"/>
</dbReference>
<dbReference type="SMR" id="A1REC5"/>
<dbReference type="GeneID" id="67441771"/>
<dbReference type="KEGG" id="shw:Sputw3181_0167"/>
<dbReference type="HOGENOM" id="CLU_093315_2_2_6"/>
<dbReference type="Proteomes" id="UP000002597">
    <property type="component" value="Chromosome"/>
</dbReference>
<dbReference type="GO" id="GO:1990904">
    <property type="term" value="C:ribonucleoprotein complex"/>
    <property type="evidence" value="ECO:0007669"/>
    <property type="project" value="UniProtKB-KW"/>
</dbReference>
<dbReference type="GO" id="GO:0005840">
    <property type="term" value="C:ribosome"/>
    <property type="evidence" value="ECO:0007669"/>
    <property type="project" value="UniProtKB-KW"/>
</dbReference>
<dbReference type="GO" id="GO:0019843">
    <property type="term" value="F:rRNA binding"/>
    <property type="evidence" value="ECO:0007669"/>
    <property type="project" value="UniProtKB-UniRule"/>
</dbReference>
<dbReference type="GO" id="GO:0003735">
    <property type="term" value="F:structural constituent of ribosome"/>
    <property type="evidence" value="ECO:0007669"/>
    <property type="project" value="InterPro"/>
</dbReference>
<dbReference type="GO" id="GO:0006412">
    <property type="term" value="P:translation"/>
    <property type="evidence" value="ECO:0007669"/>
    <property type="project" value="UniProtKB-UniRule"/>
</dbReference>
<dbReference type="CDD" id="cd06089">
    <property type="entry name" value="KOW_RPL26"/>
    <property type="match status" value="1"/>
</dbReference>
<dbReference type="FunFam" id="2.30.30.30:FF:000004">
    <property type="entry name" value="50S ribosomal protein L24"/>
    <property type="match status" value="1"/>
</dbReference>
<dbReference type="Gene3D" id="2.30.30.30">
    <property type="match status" value="1"/>
</dbReference>
<dbReference type="HAMAP" id="MF_01326_B">
    <property type="entry name" value="Ribosomal_uL24_B"/>
    <property type="match status" value="1"/>
</dbReference>
<dbReference type="InterPro" id="IPR005824">
    <property type="entry name" value="KOW"/>
</dbReference>
<dbReference type="InterPro" id="IPR014722">
    <property type="entry name" value="Rib_uL2_dom2"/>
</dbReference>
<dbReference type="InterPro" id="IPR003256">
    <property type="entry name" value="Ribosomal_uL24"/>
</dbReference>
<dbReference type="InterPro" id="IPR005825">
    <property type="entry name" value="Ribosomal_uL24_CS"/>
</dbReference>
<dbReference type="InterPro" id="IPR041988">
    <property type="entry name" value="Ribosomal_uL24_KOW"/>
</dbReference>
<dbReference type="InterPro" id="IPR008991">
    <property type="entry name" value="Translation_prot_SH3-like_sf"/>
</dbReference>
<dbReference type="NCBIfam" id="TIGR01079">
    <property type="entry name" value="rplX_bact"/>
    <property type="match status" value="1"/>
</dbReference>
<dbReference type="PANTHER" id="PTHR12903">
    <property type="entry name" value="MITOCHONDRIAL RIBOSOMAL PROTEIN L24"/>
    <property type="match status" value="1"/>
</dbReference>
<dbReference type="Pfam" id="PF00467">
    <property type="entry name" value="KOW"/>
    <property type="match status" value="1"/>
</dbReference>
<dbReference type="Pfam" id="PF17136">
    <property type="entry name" value="ribosomal_L24"/>
    <property type="match status" value="1"/>
</dbReference>
<dbReference type="SMART" id="SM00739">
    <property type="entry name" value="KOW"/>
    <property type="match status" value="1"/>
</dbReference>
<dbReference type="SUPFAM" id="SSF50104">
    <property type="entry name" value="Translation proteins SH3-like domain"/>
    <property type="match status" value="1"/>
</dbReference>
<dbReference type="PROSITE" id="PS01108">
    <property type="entry name" value="RIBOSOMAL_L24"/>
    <property type="match status" value="1"/>
</dbReference>
<gene>
    <name evidence="1" type="primary">rplX</name>
    <name type="ordered locus">Sputw3181_0167</name>
</gene>
<evidence type="ECO:0000255" key="1">
    <source>
        <dbReference type="HAMAP-Rule" id="MF_01326"/>
    </source>
</evidence>
<evidence type="ECO:0000305" key="2"/>
<protein>
    <recommendedName>
        <fullName evidence="1">Large ribosomal subunit protein uL24</fullName>
    </recommendedName>
    <alternativeName>
        <fullName evidence="2">50S ribosomal protein L24</fullName>
    </alternativeName>
</protein>
<feature type="chain" id="PRO_1000052312" description="Large ribosomal subunit protein uL24">
    <location>
        <begin position="1"/>
        <end position="104"/>
    </location>
</feature>
<organism>
    <name type="scientific">Shewanella sp. (strain W3-18-1)</name>
    <dbReference type="NCBI Taxonomy" id="351745"/>
    <lineage>
        <taxon>Bacteria</taxon>
        <taxon>Pseudomonadati</taxon>
        <taxon>Pseudomonadota</taxon>
        <taxon>Gammaproteobacteria</taxon>
        <taxon>Alteromonadales</taxon>
        <taxon>Shewanellaceae</taxon>
        <taxon>Shewanella</taxon>
    </lineage>
</organism>
<accession>A1REC5</accession>
<keyword id="KW-0687">Ribonucleoprotein</keyword>
<keyword id="KW-0689">Ribosomal protein</keyword>
<keyword id="KW-0694">RNA-binding</keyword>
<keyword id="KW-0699">rRNA-binding</keyword>
<comment type="function">
    <text evidence="1">One of two assembly initiator proteins, it binds directly to the 5'-end of the 23S rRNA, where it nucleates assembly of the 50S subunit.</text>
</comment>
<comment type="function">
    <text evidence="1">One of the proteins that surrounds the polypeptide exit tunnel on the outside of the subunit.</text>
</comment>
<comment type="subunit">
    <text evidence="1">Part of the 50S ribosomal subunit.</text>
</comment>
<comment type="similarity">
    <text evidence="1">Belongs to the universal ribosomal protein uL24 family.</text>
</comment>
<sequence>MAAKIRREDEVIVLAGKDKGKRAKVSQVLPTGKLILEGINLVKKHQKPNPQLGVAGGIVEKEAPIQASNVAIFNSATGKADRVGFRFEDGKKVRFFKSNSELVK</sequence>
<name>RL24_SHESW</name>
<proteinExistence type="inferred from homology"/>